<dbReference type="EC" id="2.1.1.242" evidence="1"/>
<dbReference type="EMBL" id="CU468135">
    <property type="protein sequence ID" value="CAO98367.1"/>
    <property type="molecule type" value="Genomic_DNA"/>
</dbReference>
<dbReference type="RefSeq" id="WP_012442991.1">
    <property type="nucleotide sequence ID" value="NC_010694.1"/>
</dbReference>
<dbReference type="SMR" id="B2VHE7"/>
<dbReference type="STRING" id="465817.ETA_33210"/>
<dbReference type="KEGG" id="eta:ETA_33210"/>
<dbReference type="eggNOG" id="COG0742">
    <property type="taxonomic scope" value="Bacteria"/>
</dbReference>
<dbReference type="HOGENOM" id="CLU_076324_0_0_6"/>
<dbReference type="Proteomes" id="UP000001726">
    <property type="component" value="Chromosome"/>
</dbReference>
<dbReference type="GO" id="GO:0005737">
    <property type="term" value="C:cytoplasm"/>
    <property type="evidence" value="ECO:0007669"/>
    <property type="project" value="UniProtKB-SubCell"/>
</dbReference>
<dbReference type="GO" id="GO:0008990">
    <property type="term" value="F:rRNA (guanine-N2-)-methyltransferase activity"/>
    <property type="evidence" value="ECO:0007669"/>
    <property type="project" value="UniProtKB-UniRule"/>
</dbReference>
<dbReference type="CDD" id="cd02440">
    <property type="entry name" value="AdoMet_MTases"/>
    <property type="match status" value="1"/>
</dbReference>
<dbReference type="Gene3D" id="3.40.50.150">
    <property type="entry name" value="Vaccinia Virus protein VP39"/>
    <property type="match status" value="1"/>
</dbReference>
<dbReference type="Gene3D" id="3.40.1630.10">
    <property type="entry name" value="YhiQ-like domain"/>
    <property type="match status" value="1"/>
</dbReference>
<dbReference type="HAMAP" id="MF_01523">
    <property type="entry name" value="16SrRNA_methyltr_J"/>
    <property type="match status" value="1"/>
</dbReference>
<dbReference type="InterPro" id="IPR007536">
    <property type="entry name" value="16SrRNA_methylTrfase_J"/>
</dbReference>
<dbReference type="InterPro" id="IPR029063">
    <property type="entry name" value="SAM-dependent_MTases_sf"/>
</dbReference>
<dbReference type="NCBIfam" id="NF008012">
    <property type="entry name" value="PRK10742.1"/>
    <property type="match status" value="1"/>
</dbReference>
<dbReference type="PANTHER" id="PTHR36112">
    <property type="entry name" value="RIBOSOMAL RNA SMALL SUBUNIT METHYLTRANSFERASE J"/>
    <property type="match status" value="1"/>
</dbReference>
<dbReference type="PANTHER" id="PTHR36112:SF1">
    <property type="entry name" value="RIBOSOMAL RNA SMALL SUBUNIT METHYLTRANSFERASE J"/>
    <property type="match status" value="1"/>
</dbReference>
<dbReference type="Pfam" id="PF04445">
    <property type="entry name" value="SAM_MT"/>
    <property type="match status" value="1"/>
</dbReference>
<dbReference type="SUPFAM" id="SSF53335">
    <property type="entry name" value="S-adenosyl-L-methionine-dependent methyltransferases"/>
    <property type="match status" value="1"/>
</dbReference>
<feature type="chain" id="PRO_1000198490" description="Ribosomal RNA small subunit methyltransferase J">
    <location>
        <begin position="1"/>
        <end position="250"/>
    </location>
</feature>
<feature type="binding site" evidence="1">
    <location>
        <begin position="101"/>
        <end position="102"/>
    </location>
    <ligand>
        <name>S-adenosyl-L-methionine</name>
        <dbReference type="ChEBI" id="CHEBI:59789"/>
    </ligand>
</feature>
<feature type="binding site" evidence="1">
    <location>
        <begin position="117"/>
        <end position="118"/>
    </location>
    <ligand>
        <name>S-adenosyl-L-methionine</name>
        <dbReference type="ChEBI" id="CHEBI:59789"/>
    </ligand>
</feature>
<feature type="binding site" evidence="1">
    <location>
        <begin position="153"/>
        <end position="154"/>
    </location>
    <ligand>
        <name>S-adenosyl-L-methionine</name>
        <dbReference type="ChEBI" id="CHEBI:59789"/>
    </ligand>
</feature>
<feature type="binding site" evidence="1">
    <location>
        <position position="171"/>
    </location>
    <ligand>
        <name>S-adenosyl-L-methionine</name>
        <dbReference type="ChEBI" id="CHEBI:59789"/>
    </ligand>
</feature>
<reference key="1">
    <citation type="journal article" date="2008" name="Environ. Microbiol.">
        <title>The genome of Erwinia tasmaniensis strain Et1/99, a non-pathogenic bacterium in the genus Erwinia.</title>
        <authorList>
            <person name="Kube M."/>
            <person name="Migdoll A.M."/>
            <person name="Mueller I."/>
            <person name="Kuhl H."/>
            <person name="Beck A."/>
            <person name="Reinhardt R."/>
            <person name="Geider K."/>
        </authorList>
    </citation>
    <scope>NUCLEOTIDE SEQUENCE [LARGE SCALE GENOMIC DNA]</scope>
    <source>
        <strain>DSM 17950 / CFBP 7177 / CIP 109463 / NCPPB 4357 / Et1/99</strain>
    </source>
</reference>
<protein>
    <recommendedName>
        <fullName evidence="1">Ribosomal RNA small subunit methyltransferase J</fullName>
        <ecNumber evidence="1">2.1.1.242</ecNumber>
    </recommendedName>
    <alternativeName>
        <fullName evidence="1">16S rRNA m2G1516 methyltransferase</fullName>
    </alternativeName>
    <alternativeName>
        <fullName evidence="1">rRNA (guanine-N(2)-)-methyltransferase</fullName>
    </alternativeName>
</protein>
<keyword id="KW-0963">Cytoplasm</keyword>
<keyword id="KW-0489">Methyltransferase</keyword>
<keyword id="KW-1185">Reference proteome</keyword>
<keyword id="KW-0698">rRNA processing</keyword>
<keyword id="KW-0949">S-adenosyl-L-methionine</keyword>
<keyword id="KW-0808">Transferase</keyword>
<proteinExistence type="inferred from homology"/>
<accession>B2VHE7</accession>
<name>RSMJ_ERWT9</name>
<comment type="function">
    <text evidence="1">Specifically methylates the guanosine in position 1516 of 16S rRNA.</text>
</comment>
<comment type="catalytic activity">
    <reaction evidence="1">
        <text>guanosine(1516) in 16S rRNA + S-adenosyl-L-methionine = N(2)-methylguanosine(1516) in 16S rRNA + S-adenosyl-L-homocysteine + H(+)</text>
        <dbReference type="Rhea" id="RHEA:43220"/>
        <dbReference type="Rhea" id="RHEA-COMP:10412"/>
        <dbReference type="Rhea" id="RHEA-COMP:10413"/>
        <dbReference type="ChEBI" id="CHEBI:15378"/>
        <dbReference type="ChEBI" id="CHEBI:57856"/>
        <dbReference type="ChEBI" id="CHEBI:59789"/>
        <dbReference type="ChEBI" id="CHEBI:74269"/>
        <dbReference type="ChEBI" id="CHEBI:74481"/>
        <dbReference type="EC" id="2.1.1.242"/>
    </reaction>
</comment>
<comment type="subcellular location">
    <subcellularLocation>
        <location evidence="1">Cytoplasm</location>
    </subcellularLocation>
</comment>
<comment type="similarity">
    <text evidence="1">Belongs to the methyltransferase superfamily. RsmJ family.</text>
</comment>
<evidence type="ECO:0000255" key="1">
    <source>
        <dbReference type="HAMAP-Rule" id="MF_01523"/>
    </source>
</evidence>
<gene>
    <name evidence="1" type="primary">rsmJ</name>
    <name type="ordered locus">ETA_33210</name>
</gene>
<sequence>MNICLLDESGAGDGALSVLAARWQLEHDDSAPMALVLTPQHLELRKRDEPKLGGIFVDFVSGAMAHRRKFGGGRGEAVAKAVGIKSGYLPDVVDATAGLGRDAFVLAALGCRVRMLERNPVVAALLDDGLRRGYADVEIGPWLRENLTLLHASSLSALTDITPQPDVVYLDPMYPHKQKSALVKKEMRVFQSLVGADEDADGLLQPARTLAKKRVVVKRPDYAPPLAGLTTPNAVNTKSHRFDIYAPLTR</sequence>
<organism>
    <name type="scientific">Erwinia tasmaniensis (strain DSM 17950 / CFBP 7177 / CIP 109463 / NCPPB 4357 / Et1/99)</name>
    <dbReference type="NCBI Taxonomy" id="465817"/>
    <lineage>
        <taxon>Bacteria</taxon>
        <taxon>Pseudomonadati</taxon>
        <taxon>Pseudomonadota</taxon>
        <taxon>Gammaproteobacteria</taxon>
        <taxon>Enterobacterales</taxon>
        <taxon>Erwiniaceae</taxon>
        <taxon>Erwinia</taxon>
    </lineage>
</organism>